<protein>
    <recommendedName>
        <fullName>Deoxyribonuclease</fullName>
        <shortName>DNase</shortName>
        <ecNumber>3.1.21.1</ecNumber>
    </recommendedName>
    <alternativeName>
        <fullName>Streptodornase</fullName>
    </alternativeName>
</protein>
<comment type="function">
    <text>May have a role in S.equisimilis virulence.</text>
</comment>
<comment type="catalytic activity">
    <reaction>
        <text>Endonucleolytic cleavage to 5'-phosphodinucleotide and 5'-phosphooligonucleotide end-products.</text>
        <dbReference type="EC" id="3.1.21.1"/>
    </reaction>
</comment>
<accession>P26295</accession>
<feature type="signal peptide" description="Or 35" evidence="1">
    <location>
        <begin position="1"/>
        <end position="24"/>
    </location>
</feature>
<feature type="chain" id="PRO_0000021119" description="Deoxyribonuclease">
    <location>
        <begin position="25"/>
        <end position="327"/>
    </location>
</feature>
<feature type="region of interest" description="Disordered" evidence="2">
    <location>
        <begin position="299"/>
        <end position="327"/>
    </location>
</feature>
<reference key="1">
    <citation type="journal article" date="1991" name="Gene">
        <title>Isolation, sequence and expression in Escherichia coli, Bacillus subtilis and Lactococcus lactis of the DNase (streptodornase)-encoding gene from Streptococcus equisimilis H46A.</title>
        <authorList>
            <person name="Wolinowska R."/>
            <person name="Ceglowski P."/>
            <person name="Kok J."/>
            <person name="Venema G."/>
        </authorList>
    </citation>
    <scope>NUCLEOTIDE SEQUENCE [GENOMIC DNA]</scope>
    <source>
        <strain>H46A</strain>
    </source>
</reference>
<name>DRN1_STREQ</name>
<sequence>MSKKLRNFLVRIIVAAFASFAVMAIPPYHHNTVLAKTVSVNQTYGEYKDYYTVIGESNIDQSAFPKIYKTTERVYKGQGTSEKRVTVSDVVYNPLDGYKRSTGAYGVVTKDMIDMSKGYREKWETNPEPSGWFRFYNRADNEEISEKEYDSRRTKSYKVTNNVPVVLTTLKGKKYNSHLFVASHLFADSLGGKSIRKNAITGTQMQNVGTRKGGMQYIEKKVLSHITKNPDVYVFYSAIPEYQGAELLARSVLVSALSSDGVINETVRVFNTADGFNINYEKGGLLTESPVSEIDNIEDSTTDEIENSVDDSEEIVYNDTTTEEEEN</sequence>
<organism>
    <name type="scientific">Streptococcus dysgalactiae subsp. equisimilis</name>
    <name type="common">Streptococcus equisimilis</name>
    <dbReference type="NCBI Taxonomy" id="119602"/>
    <lineage>
        <taxon>Bacteria</taxon>
        <taxon>Bacillati</taxon>
        <taxon>Bacillota</taxon>
        <taxon>Bacilli</taxon>
        <taxon>Lactobacillales</taxon>
        <taxon>Streptococcaceae</taxon>
        <taxon>Streptococcus</taxon>
    </lineage>
</organism>
<evidence type="ECO:0000255" key="1"/>
<evidence type="ECO:0000256" key="2">
    <source>
        <dbReference type="SAM" id="MobiDB-lite"/>
    </source>
</evidence>
<dbReference type="EC" id="3.1.21.1"/>
<dbReference type="EMBL" id="X17241">
    <property type="protein sequence ID" value="CAA35106.1"/>
    <property type="molecule type" value="Genomic_DNA"/>
</dbReference>
<dbReference type="PIR" id="JT0584">
    <property type="entry name" value="JT0584"/>
</dbReference>
<dbReference type="SMR" id="P26295"/>
<dbReference type="GO" id="GO:0004530">
    <property type="term" value="F:deoxyribonuclease I activity"/>
    <property type="evidence" value="ECO:0007669"/>
    <property type="project" value="UniProtKB-EC"/>
</dbReference>
<dbReference type="GO" id="GO:0046872">
    <property type="term" value="F:metal ion binding"/>
    <property type="evidence" value="ECO:0007669"/>
    <property type="project" value="InterPro"/>
</dbReference>
<dbReference type="GO" id="GO:0003676">
    <property type="term" value="F:nucleic acid binding"/>
    <property type="evidence" value="ECO:0007669"/>
    <property type="project" value="InterPro"/>
</dbReference>
<dbReference type="Gene3D" id="3.40.570.10">
    <property type="entry name" value="Extracellular Endonuclease, subunit A"/>
    <property type="match status" value="1"/>
</dbReference>
<dbReference type="InterPro" id="IPR044929">
    <property type="entry name" value="DNA/RNA_non-sp_Endonuclease_sf"/>
</dbReference>
<dbReference type="InterPro" id="IPR001604">
    <property type="entry name" value="Endo_G_ENPP1-like_dom"/>
</dbReference>
<dbReference type="InterPro" id="IPR044927">
    <property type="entry name" value="Endonuclea_NS_2"/>
</dbReference>
<dbReference type="Pfam" id="PF13930">
    <property type="entry name" value="Endonuclea_NS_2"/>
    <property type="match status" value="1"/>
</dbReference>
<dbReference type="SMART" id="SM00892">
    <property type="entry name" value="Endonuclease_NS"/>
    <property type="match status" value="1"/>
</dbReference>
<keyword id="KW-0255">Endonuclease</keyword>
<keyword id="KW-0378">Hydrolase</keyword>
<keyword id="KW-0540">Nuclease</keyword>
<keyword id="KW-0732">Signal</keyword>
<keyword id="KW-0843">Virulence</keyword>
<gene>
    <name type="primary">sdc</name>
</gene>
<proteinExistence type="inferred from homology"/>